<dbReference type="EC" id="2.7.1.158"/>
<dbReference type="EMBL" id="CR380954">
    <property type="protein sequence ID" value="CAG60046.1"/>
    <property type="molecule type" value="Genomic_DNA"/>
</dbReference>
<dbReference type="RefSeq" id="XP_447113.1">
    <property type="nucleotide sequence ID" value="XM_447113.1"/>
</dbReference>
<dbReference type="SMR" id="Q6FRN1"/>
<dbReference type="FunCoup" id="Q6FRN1">
    <property type="interactions" value="46"/>
</dbReference>
<dbReference type="STRING" id="284593.Q6FRN1"/>
<dbReference type="EnsemblFungi" id="CAGL0H07271g-T">
    <property type="protein sequence ID" value="CAGL0H07271g-T-p1"/>
    <property type="gene ID" value="CAGL0H07271g"/>
</dbReference>
<dbReference type="KEGG" id="cgr:2888465"/>
<dbReference type="CGD" id="CAL0130307">
    <property type="gene designation" value="CAGL0H07271g"/>
</dbReference>
<dbReference type="VEuPathDB" id="FungiDB:CAGL0H07271g"/>
<dbReference type="eggNOG" id="ENOG502S05I">
    <property type="taxonomic scope" value="Eukaryota"/>
</dbReference>
<dbReference type="HOGENOM" id="CLU_046294_0_0_1"/>
<dbReference type="InParanoid" id="Q6FRN1"/>
<dbReference type="OMA" id="FIELRCK"/>
<dbReference type="Proteomes" id="UP000002428">
    <property type="component" value="Chromosome H"/>
</dbReference>
<dbReference type="GO" id="GO:0005634">
    <property type="term" value="C:nucleus"/>
    <property type="evidence" value="ECO:0007669"/>
    <property type="project" value="UniProtKB-SubCell"/>
</dbReference>
<dbReference type="GO" id="GO:0005524">
    <property type="term" value="F:ATP binding"/>
    <property type="evidence" value="ECO:0007669"/>
    <property type="project" value="UniProtKB-KW"/>
</dbReference>
<dbReference type="GO" id="GO:0035299">
    <property type="term" value="F:inositol-1,3,4,5,6-pentakisphosphate 2-kinase activity"/>
    <property type="evidence" value="ECO:0007669"/>
    <property type="project" value="UniProtKB-EC"/>
</dbReference>
<dbReference type="GO" id="GO:0032958">
    <property type="term" value="P:inositol phosphate biosynthetic process"/>
    <property type="evidence" value="ECO:0007669"/>
    <property type="project" value="EnsemblFungi"/>
</dbReference>
<dbReference type="GO" id="GO:0070481">
    <property type="term" value="P:nuclear-transcribed mRNA catabolic process, non-stop decay"/>
    <property type="evidence" value="ECO:0007669"/>
    <property type="project" value="EnsemblFungi"/>
</dbReference>
<dbReference type="InterPro" id="IPR009286">
    <property type="entry name" value="Ins_P5_2-kin"/>
</dbReference>
<dbReference type="PANTHER" id="PTHR14456">
    <property type="entry name" value="INOSITOL POLYPHOSPHATE KINASE 1"/>
    <property type="match status" value="1"/>
</dbReference>
<dbReference type="PANTHER" id="PTHR14456:SF2">
    <property type="entry name" value="INOSITOL-PENTAKISPHOSPHATE 2-KINASE"/>
    <property type="match status" value="1"/>
</dbReference>
<dbReference type="Pfam" id="PF06090">
    <property type="entry name" value="Ins_P5_2-kin"/>
    <property type="match status" value="2"/>
</dbReference>
<evidence type="ECO:0000250" key="1"/>
<evidence type="ECO:0000305" key="2"/>
<feature type="chain" id="PRO_0000110523" description="Inositol-pentakisphosphate 2-kinase">
    <location>
        <begin position="1"/>
        <end position="278"/>
    </location>
</feature>
<feature type="short sequence motif" description="EXKPK motif">
    <location>
        <begin position="124"/>
        <end position="128"/>
    </location>
</feature>
<gene>
    <name type="primary">IPK1</name>
    <name type="ordered locus">CAGL0H07271g</name>
</gene>
<organism>
    <name type="scientific">Candida glabrata (strain ATCC 2001 / BCRC 20586 / JCM 3761 / NBRC 0622 / NRRL Y-65 / CBS 138)</name>
    <name type="common">Yeast</name>
    <name type="synonym">Nakaseomyces glabratus</name>
    <dbReference type="NCBI Taxonomy" id="284593"/>
    <lineage>
        <taxon>Eukaryota</taxon>
        <taxon>Fungi</taxon>
        <taxon>Dikarya</taxon>
        <taxon>Ascomycota</taxon>
        <taxon>Saccharomycotina</taxon>
        <taxon>Saccharomycetes</taxon>
        <taxon>Saccharomycetales</taxon>
        <taxon>Saccharomycetaceae</taxon>
        <taxon>Nakaseomyces</taxon>
    </lineage>
</organism>
<sequence length="278" mass="32200">MLVAEGGANILLELDHRGVLYRCNVRDKSLKVNNEYTYKNYRYINQVVRPLLGDCIPEMELVDIPYDRISGIIGDFVGDPDSDHVSALTIKNLRPTNVYGEKIRYDDHFTKVYHDDTMEHILVEIKPKWLHHAKFCRNCTHNNLKNRKIPYCYALMVVDPSHVSDMLLHTGIAFPRKFLIKFVDYFSKSDNILAKLHDIQKNLDSNVSMNDIKSIDDVSDAFLLNMTLKDVSCFIEWTREPDSLEVNVVDVDMKLVSKLDHWVNTHIQLSNSSNLVHH</sequence>
<comment type="function">
    <text evidence="1">Has kinase activity and phosphorylates inositol-1,3,4,5,6-pentakisphosphate (Ins(1,3,4,5,6)P5) to produce 1,2,3,4,5,6-hexakisphosphate (InsP6), also known as phytate.</text>
</comment>
<comment type="catalytic activity">
    <reaction>
        <text>1D-myo-inositol 1,3,4,5,6-pentakisphosphate + ATP = 1D-myo-inositol hexakisphosphate + ADP + H(+)</text>
        <dbReference type="Rhea" id="RHEA:20313"/>
        <dbReference type="ChEBI" id="CHEBI:15378"/>
        <dbReference type="ChEBI" id="CHEBI:30616"/>
        <dbReference type="ChEBI" id="CHEBI:57733"/>
        <dbReference type="ChEBI" id="CHEBI:58130"/>
        <dbReference type="ChEBI" id="CHEBI:456216"/>
        <dbReference type="EC" id="2.7.1.158"/>
    </reaction>
</comment>
<comment type="subcellular location">
    <subcellularLocation>
        <location evidence="1">Nucleus</location>
    </subcellularLocation>
</comment>
<comment type="domain">
    <text>The EXKPK motif is conserved in inositol-pentakisphosphate 2-kinases of both family 1 and 2.</text>
</comment>
<comment type="similarity">
    <text evidence="2">Belongs to the IPK1 type 1 family.</text>
</comment>
<reference key="1">
    <citation type="journal article" date="2004" name="Nature">
        <title>Genome evolution in yeasts.</title>
        <authorList>
            <person name="Dujon B."/>
            <person name="Sherman D."/>
            <person name="Fischer G."/>
            <person name="Durrens P."/>
            <person name="Casaregola S."/>
            <person name="Lafontaine I."/>
            <person name="de Montigny J."/>
            <person name="Marck C."/>
            <person name="Neuveglise C."/>
            <person name="Talla E."/>
            <person name="Goffard N."/>
            <person name="Frangeul L."/>
            <person name="Aigle M."/>
            <person name="Anthouard V."/>
            <person name="Babour A."/>
            <person name="Barbe V."/>
            <person name="Barnay S."/>
            <person name="Blanchin S."/>
            <person name="Beckerich J.-M."/>
            <person name="Beyne E."/>
            <person name="Bleykasten C."/>
            <person name="Boisrame A."/>
            <person name="Boyer J."/>
            <person name="Cattolico L."/>
            <person name="Confanioleri F."/>
            <person name="de Daruvar A."/>
            <person name="Despons L."/>
            <person name="Fabre E."/>
            <person name="Fairhead C."/>
            <person name="Ferry-Dumazet H."/>
            <person name="Groppi A."/>
            <person name="Hantraye F."/>
            <person name="Hennequin C."/>
            <person name="Jauniaux N."/>
            <person name="Joyet P."/>
            <person name="Kachouri R."/>
            <person name="Kerrest A."/>
            <person name="Koszul R."/>
            <person name="Lemaire M."/>
            <person name="Lesur I."/>
            <person name="Ma L."/>
            <person name="Muller H."/>
            <person name="Nicaud J.-M."/>
            <person name="Nikolski M."/>
            <person name="Oztas S."/>
            <person name="Ozier-Kalogeropoulos O."/>
            <person name="Pellenz S."/>
            <person name="Potier S."/>
            <person name="Richard G.-F."/>
            <person name="Straub M.-L."/>
            <person name="Suleau A."/>
            <person name="Swennen D."/>
            <person name="Tekaia F."/>
            <person name="Wesolowski-Louvel M."/>
            <person name="Westhof E."/>
            <person name="Wirth B."/>
            <person name="Zeniou-Meyer M."/>
            <person name="Zivanovic Y."/>
            <person name="Bolotin-Fukuhara M."/>
            <person name="Thierry A."/>
            <person name="Bouchier C."/>
            <person name="Caudron B."/>
            <person name="Scarpelli C."/>
            <person name="Gaillardin C."/>
            <person name="Weissenbach J."/>
            <person name="Wincker P."/>
            <person name="Souciet J.-L."/>
        </authorList>
    </citation>
    <scope>NUCLEOTIDE SEQUENCE [LARGE SCALE GENOMIC DNA]</scope>
    <source>
        <strain>ATCC 2001 / BCRC 20586 / JCM 3761 / NBRC 0622 / NRRL Y-65 / CBS 138</strain>
    </source>
</reference>
<name>IPK1_CANGA</name>
<proteinExistence type="inferred from homology"/>
<protein>
    <recommendedName>
        <fullName>Inositol-pentakisphosphate 2-kinase</fullName>
        <ecNumber>2.7.1.158</ecNumber>
    </recommendedName>
    <alternativeName>
        <fullName>Inositol-1,3,4,5,6-pentakisphosphate 2-kinase</fullName>
    </alternativeName>
    <alternativeName>
        <fullName>Ins(1,3,4,5,6)P5 2-kinase</fullName>
        <shortName>InsP5 2-kinase</shortName>
    </alternativeName>
</protein>
<accession>Q6FRN1</accession>
<keyword id="KW-0067">ATP-binding</keyword>
<keyword id="KW-0418">Kinase</keyword>
<keyword id="KW-0547">Nucleotide-binding</keyword>
<keyword id="KW-0539">Nucleus</keyword>
<keyword id="KW-1185">Reference proteome</keyword>
<keyword id="KW-0808">Transferase</keyword>